<name>MNMA_XANE5</name>
<reference key="1">
    <citation type="journal article" date="2005" name="J. Bacteriol.">
        <title>Insights into genome plasticity and pathogenicity of the plant pathogenic Bacterium Xanthomonas campestris pv. vesicatoria revealed by the complete genome sequence.</title>
        <authorList>
            <person name="Thieme F."/>
            <person name="Koebnik R."/>
            <person name="Bekel T."/>
            <person name="Berger C."/>
            <person name="Boch J."/>
            <person name="Buettner D."/>
            <person name="Caldana C."/>
            <person name="Gaigalat L."/>
            <person name="Goesmann A."/>
            <person name="Kay S."/>
            <person name="Kirchner O."/>
            <person name="Lanz C."/>
            <person name="Linke B."/>
            <person name="McHardy A.C."/>
            <person name="Meyer F."/>
            <person name="Mittenhuber G."/>
            <person name="Nies D.H."/>
            <person name="Niesbach-Kloesgen U."/>
            <person name="Patschkowski T."/>
            <person name="Rueckert C."/>
            <person name="Rupp O."/>
            <person name="Schneiker S."/>
            <person name="Schuster S.C."/>
            <person name="Vorhoelter F.J."/>
            <person name="Weber E."/>
            <person name="Puehler A."/>
            <person name="Bonas U."/>
            <person name="Bartels D."/>
            <person name="Kaiser O."/>
        </authorList>
    </citation>
    <scope>NUCLEOTIDE SEQUENCE [LARGE SCALE GENOMIC DNA]</scope>
    <source>
        <strain>85-10</strain>
    </source>
</reference>
<dbReference type="EC" id="2.8.1.13" evidence="1"/>
<dbReference type="EMBL" id="AM039952">
    <property type="protein sequence ID" value="CAJ23723.1"/>
    <property type="molecule type" value="Genomic_DNA"/>
</dbReference>
<dbReference type="RefSeq" id="WP_011347297.1">
    <property type="nucleotide sequence ID" value="NZ_CP017190.1"/>
</dbReference>
<dbReference type="SMR" id="Q3BTY6"/>
<dbReference type="STRING" id="456327.BJD11_12195"/>
<dbReference type="KEGG" id="xcv:XCV2046"/>
<dbReference type="eggNOG" id="COG0482">
    <property type="taxonomic scope" value="Bacteria"/>
</dbReference>
<dbReference type="HOGENOM" id="CLU_035188_1_0_6"/>
<dbReference type="Proteomes" id="UP000007069">
    <property type="component" value="Chromosome"/>
</dbReference>
<dbReference type="GO" id="GO:0005737">
    <property type="term" value="C:cytoplasm"/>
    <property type="evidence" value="ECO:0007669"/>
    <property type="project" value="UniProtKB-SubCell"/>
</dbReference>
<dbReference type="GO" id="GO:0005524">
    <property type="term" value="F:ATP binding"/>
    <property type="evidence" value="ECO:0007669"/>
    <property type="project" value="UniProtKB-KW"/>
</dbReference>
<dbReference type="GO" id="GO:0000049">
    <property type="term" value="F:tRNA binding"/>
    <property type="evidence" value="ECO:0007669"/>
    <property type="project" value="UniProtKB-KW"/>
</dbReference>
<dbReference type="GO" id="GO:0103016">
    <property type="term" value="F:tRNA-uridine 2-sulfurtransferase activity"/>
    <property type="evidence" value="ECO:0007669"/>
    <property type="project" value="UniProtKB-EC"/>
</dbReference>
<dbReference type="GO" id="GO:0002143">
    <property type="term" value="P:tRNA wobble position uridine thiolation"/>
    <property type="evidence" value="ECO:0007669"/>
    <property type="project" value="TreeGrafter"/>
</dbReference>
<dbReference type="CDD" id="cd01998">
    <property type="entry name" value="MnmA_TRMU-like"/>
    <property type="match status" value="1"/>
</dbReference>
<dbReference type="FunFam" id="2.30.30.280:FF:000001">
    <property type="entry name" value="tRNA-specific 2-thiouridylase MnmA"/>
    <property type="match status" value="1"/>
</dbReference>
<dbReference type="FunFam" id="2.40.30.10:FF:000023">
    <property type="entry name" value="tRNA-specific 2-thiouridylase MnmA"/>
    <property type="match status" value="1"/>
</dbReference>
<dbReference type="FunFam" id="3.40.50.620:FF:000004">
    <property type="entry name" value="tRNA-specific 2-thiouridylase MnmA"/>
    <property type="match status" value="1"/>
</dbReference>
<dbReference type="Gene3D" id="2.30.30.280">
    <property type="entry name" value="Adenine nucleotide alpha hydrolases-like domains"/>
    <property type="match status" value="1"/>
</dbReference>
<dbReference type="Gene3D" id="3.40.50.620">
    <property type="entry name" value="HUPs"/>
    <property type="match status" value="1"/>
</dbReference>
<dbReference type="Gene3D" id="2.40.30.10">
    <property type="entry name" value="Translation factors"/>
    <property type="match status" value="1"/>
</dbReference>
<dbReference type="HAMAP" id="MF_00144">
    <property type="entry name" value="tRNA_thiouridyl_MnmA"/>
    <property type="match status" value="1"/>
</dbReference>
<dbReference type="InterPro" id="IPR004506">
    <property type="entry name" value="MnmA-like"/>
</dbReference>
<dbReference type="InterPro" id="IPR046885">
    <property type="entry name" value="MnmA-like_C"/>
</dbReference>
<dbReference type="InterPro" id="IPR046884">
    <property type="entry name" value="MnmA-like_central"/>
</dbReference>
<dbReference type="InterPro" id="IPR023382">
    <property type="entry name" value="MnmA-like_central_sf"/>
</dbReference>
<dbReference type="InterPro" id="IPR014729">
    <property type="entry name" value="Rossmann-like_a/b/a_fold"/>
</dbReference>
<dbReference type="NCBIfam" id="NF001138">
    <property type="entry name" value="PRK00143.1"/>
    <property type="match status" value="1"/>
</dbReference>
<dbReference type="NCBIfam" id="TIGR00420">
    <property type="entry name" value="trmU"/>
    <property type="match status" value="1"/>
</dbReference>
<dbReference type="PANTHER" id="PTHR11933:SF5">
    <property type="entry name" value="MITOCHONDRIAL TRNA-SPECIFIC 2-THIOURIDYLASE 1"/>
    <property type="match status" value="1"/>
</dbReference>
<dbReference type="PANTHER" id="PTHR11933">
    <property type="entry name" value="TRNA 5-METHYLAMINOMETHYL-2-THIOURIDYLATE -METHYLTRANSFERASE"/>
    <property type="match status" value="1"/>
</dbReference>
<dbReference type="Pfam" id="PF03054">
    <property type="entry name" value="tRNA_Me_trans"/>
    <property type="match status" value="1"/>
</dbReference>
<dbReference type="Pfam" id="PF20258">
    <property type="entry name" value="tRNA_Me_trans_C"/>
    <property type="match status" value="1"/>
</dbReference>
<dbReference type="Pfam" id="PF20259">
    <property type="entry name" value="tRNA_Me_trans_M"/>
    <property type="match status" value="1"/>
</dbReference>
<dbReference type="SUPFAM" id="SSF52402">
    <property type="entry name" value="Adenine nucleotide alpha hydrolases-like"/>
    <property type="match status" value="1"/>
</dbReference>
<proteinExistence type="inferred from homology"/>
<organism>
    <name type="scientific">Xanthomonas euvesicatoria pv. vesicatoria (strain 85-10)</name>
    <name type="common">Xanthomonas campestris pv. vesicatoria</name>
    <dbReference type="NCBI Taxonomy" id="316273"/>
    <lineage>
        <taxon>Bacteria</taxon>
        <taxon>Pseudomonadati</taxon>
        <taxon>Pseudomonadota</taxon>
        <taxon>Gammaproteobacteria</taxon>
        <taxon>Lysobacterales</taxon>
        <taxon>Lysobacteraceae</taxon>
        <taxon>Xanthomonas</taxon>
    </lineage>
</organism>
<protein>
    <recommendedName>
        <fullName evidence="1">tRNA-specific 2-thiouridylase MnmA</fullName>
        <ecNumber evidence="1">2.8.1.13</ecNumber>
    </recommendedName>
</protein>
<gene>
    <name evidence="1" type="primary">mnmA</name>
    <name type="synonym">trmU</name>
    <name type="ordered locus">XCV2046</name>
</gene>
<feature type="chain" id="PRO_1000009597" description="tRNA-specific 2-thiouridylase MnmA">
    <location>
        <begin position="1"/>
        <end position="378"/>
    </location>
</feature>
<feature type="region of interest" description="Interaction with target base in tRNA" evidence="1">
    <location>
        <begin position="94"/>
        <end position="96"/>
    </location>
</feature>
<feature type="region of interest" description="Interaction with tRNA" evidence="1">
    <location>
        <begin position="145"/>
        <end position="147"/>
    </location>
</feature>
<feature type="region of interest" description="Interaction with tRNA" evidence="1">
    <location>
        <begin position="307"/>
        <end position="308"/>
    </location>
</feature>
<feature type="active site" description="Nucleophile" evidence="1">
    <location>
        <position position="99"/>
    </location>
</feature>
<feature type="active site" description="Cysteine persulfide intermediate" evidence="1">
    <location>
        <position position="195"/>
    </location>
</feature>
<feature type="binding site" evidence="1">
    <location>
        <begin position="9"/>
        <end position="16"/>
    </location>
    <ligand>
        <name>ATP</name>
        <dbReference type="ChEBI" id="CHEBI:30616"/>
    </ligand>
</feature>
<feature type="binding site" evidence="1">
    <location>
        <position position="35"/>
    </location>
    <ligand>
        <name>ATP</name>
        <dbReference type="ChEBI" id="CHEBI:30616"/>
    </ligand>
</feature>
<feature type="binding site" evidence="1">
    <location>
        <position position="123"/>
    </location>
    <ligand>
        <name>ATP</name>
        <dbReference type="ChEBI" id="CHEBI:30616"/>
    </ligand>
</feature>
<feature type="site" description="Interaction with tRNA" evidence="1">
    <location>
        <position position="124"/>
    </location>
</feature>
<feature type="site" description="Interaction with tRNA" evidence="1">
    <location>
        <position position="340"/>
    </location>
</feature>
<feature type="disulfide bond" description="Alternate" evidence="1">
    <location>
        <begin position="99"/>
        <end position="195"/>
    </location>
</feature>
<accession>Q3BTY6</accession>
<sequence length="378" mass="41458">MSTPRIVLGVSGGVDSSVAAWKLAQQGEPIAGLFMQNWADDGSGDCRAEDDRRDAVAVCGVLGIPFHFRDFSGEYWNGVFAHFLAEYAAGRTPNPDVLCNREVKFKHFLDAAQALGAERIATGHYAQVAHRGGRWRLLRGADRGKDQSYFLHQLGQAQLAATLFPIGDLEKSTLRRIAQDAGLPTHAKKDSTGICFIGERDFREFLGRYLPARAGEIRDPQGQRIAEHPGVFYFTLGQREGLNIGGVRGRAAAPWYVVGKDVANNVLYVDQDRDSPLLQSRWLQSEQAHWVTGAPPARRFTCTAQTRYRQPDEPCTVDVQDDGSVQVRFERPQRAVTPGQSLVLYDGEECLGGAVIAATDAPLERQLAGSSFSSEVVA</sequence>
<keyword id="KW-0067">ATP-binding</keyword>
<keyword id="KW-0963">Cytoplasm</keyword>
<keyword id="KW-1015">Disulfide bond</keyword>
<keyword id="KW-0547">Nucleotide-binding</keyword>
<keyword id="KW-0694">RNA-binding</keyword>
<keyword id="KW-0808">Transferase</keyword>
<keyword id="KW-0819">tRNA processing</keyword>
<keyword id="KW-0820">tRNA-binding</keyword>
<evidence type="ECO:0000255" key="1">
    <source>
        <dbReference type="HAMAP-Rule" id="MF_00144"/>
    </source>
</evidence>
<comment type="function">
    <text evidence="1">Catalyzes the 2-thiolation of uridine at the wobble position (U34) of tRNA, leading to the formation of s(2)U34.</text>
</comment>
<comment type="catalytic activity">
    <reaction evidence="1">
        <text>S-sulfanyl-L-cysteinyl-[protein] + uridine(34) in tRNA + AH2 + ATP = 2-thiouridine(34) in tRNA + L-cysteinyl-[protein] + A + AMP + diphosphate + H(+)</text>
        <dbReference type="Rhea" id="RHEA:47032"/>
        <dbReference type="Rhea" id="RHEA-COMP:10131"/>
        <dbReference type="Rhea" id="RHEA-COMP:11726"/>
        <dbReference type="Rhea" id="RHEA-COMP:11727"/>
        <dbReference type="Rhea" id="RHEA-COMP:11728"/>
        <dbReference type="ChEBI" id="CHEBI:13193"/>
        <dbReference type="ChEBI" id="CHEBI:15378"/>
        <dbReference type="ChEBI" id="CHEBI:17499"/>
        <dbReference type="ChEBI" id="CHEBI:29950"/>
        <dbReference type="ChEBI" id="CHEBI:30616"/>
        <dbReference type="ChEBI" id="CHEBI:33019"/>
        <dbReference type="ChEBI" id="CHEBI:61963"/>
        <dbReference type="ChEBI" id="CHEBI:65315"/>
        <dbReference type="ChEBI" id="CHEBI:87170"/>
        <dbReference type="ChEBI" id="CHEBI:456215"/>
        <dbReference type="EC" id="2.8.1.13"/>
    </reaction>
</comment>
<comment type="subcellular location">
    <subcellularLocation>
        <location evidence="1">Cytoplasm</location>
    </subcellularLocation>
</comment>
<comment type="similarity">
    <text evidence="1">Belongs to the MnmA/TRMU family.</text>
</comment>